<accession>B8EPF2</accession>
<name>ARLY_METSB</name>
<keyword id="KW-0028">Amino-acid biosynthesis</keyword>
<keyword id="KW-0055">Arginine biosynthesis</keyword>
<keyword id="KW-0963">Cytoplasm</keyword>
<keyword id="KW-0456">Lyase</keyword>
<keyword id="KW-1185">Reference proteome</keyword>
<proteinExistence type="inferred from homology"/>
<protein>
    <recommendedName>
        <fullName evidence="1">Argininosuccinate lyase</fullName>
        <shortName evidence="1">ASAL</shortName>
        <ecNumber evidence="1">4.3.2.1</ecNumber>
    </recommendedName>
    <alternativeName>
        <fullName evidence="1">Arginosuccinase</fullName>
    </alternativeName>
</protein>
<reference key="1">
    <citation type="journal article" date="2010" name="J. Bacteriol.">
        <title>Complete genome sequence of the aerobic facultative methanotroph Methylocella silvestris BL2.</title>
        <authorList>
            <person name="Chen Y."/>
            <person name="Crombie A."/>
            <person name="Rahman M.T."/>
            <person name="Dedysh S.N."/>
            <person name="Liesack W."/>
            <person name="Stott M.B."/>
            <person name="Alam M."/>
            <person name="Theisen A.R."/>
            <person name="Murrell J.C."/>
            <person name="Dunfield P.F."/>
        </authorList>
    </citation>
    <scope>NUCLEOTIDE SEQUENCE [LARGE SCALE GENOMIC DNA]</scope>
    <source>
        <strain>DSM 15510 / CIP 108128 / LMG 27833 / NCIMB 13906 / BL2</strain>
    </source>
</reference>
<sequence>MSNKMWGGRFASGPDAIMEEINASIGFDYRLAMQDIAGSKAHVAMLADVGIVSADDAADITQGLEAIKAEIESGAFTFSRALEDIHMNVESRLAALIGPAAGRLHTARSRNDQVALDFRLWVRDTIDALDGQLRGLQLALAEKAKLYAGAVMPGFTHMQSAQPVTFGHHLLAYVEMFARDRSRLRDARARLNESPLGAAALAGTSFPIDRHATARALGFDRPTANSLDSVSDRDFVLETLSAAAIAAVHLSRFAEEIVLWSTPQFGFARLSDKFSTGSSIMPQKRNPDAAELVRGKAGRVIGALTGLLVVMKGLPLTYSKDMQEDKEGAFDALHSLSLCLAAMTGMVKDIEPDTERMKAAAGAGYATATDLADWLVKALGLPFREAHHVTGRLVAAASAQDKGLEELALAEMQAVEPRINAGVFAVLGVENSVRSRMSYGGTAPANVSEQAERWLGALAAEPASKI</sequence>
<evidence type="ECO:0000255" key="1">
    <source>
        <dbReference type="HAMAP-Rule" id="MF_00006"/>
    </source>
</evidence>
<dbReference type="EC" id="4.3.2.1" evidence="1"/>
<dbReference type="EMBL" id="CP001280">
    <property type="protein sequence ID" value="ACK50157.1"/>
    <property type="molecule type" value="Genomic_DNA"/>
</dbReference>
<dbReference type="RefSeq" id="WP_012590227.1">
    <property type="nucleotide sequence ID" value="NC_011666.1"/>
</dbReference>
<dbReference type="SMR" id="B8EPF2"/>
<dbReference type="STRING" id="395965.Msil_1188"/>
<dbReference type="KEGG" id="msl:Msil_1188"/>
<dbReference type="eggNOG" id="COG0165">
    <property type="taxonomic scope" value="Bacteria"/>
</dbReference>
<dbReference type="HOGENOM" id="CLU_027272_2_3_5"/>
<dbReference type="OrthoDB" id="9769623at2"/>
<dbReference type="UniPathway" id="UPA00068">
    <property type="reaction ID" value="UER00114"/>
</dbReference>
<dbReference type="Proteomes" id="UP000002257">
    <property type="component" value="Chromosome"/>
</dbReference>
<dbReference type="GO" id="GO:0005829">
    <property type="term" value="C:cytosol"/>
    <property type="evidence" value="ECO:0007669"/>
    <property type="project" value="TreeGrafter"/>
</dbReference>
<dbReference type="GO" id="GO:0004056">
    <property type="term" value="F:argininosuccinate lyase activity"/>
    <property type="evidence" value="ECO:0007669"/>
    <property type="project" value="UniProtKB-UniRule"/>
</dbReference>
<dbReference type="GO" id="GO:0042450">
    <property type="term" value="P:arginine biosynthetic process via ornithine"/>
    <property type="evidence" value="ECO:0007669"/>
    <property type="project" value="InterPro"/>
</dbReference>
<dbReference type="GO" id="GO:0006526">
    <property type="term" value="P:L-arginine biosynthetic process"/>
    <property type="evidence" value="ECO:0007669"/>
    <property type="project" value="UniProtKB-UniRule"/>
</dbReference>
<dbReference type="CDD" id="cd01359">
    <property type="entry name" value="Argininosuccinate_lyase"/>
    <property type="match status" value="1"/>
</dbReference>
<dbReference type="FunFam" id="1.10.275.10:FF:000002">
    <property type="entry name" value="Argininosuccinate lyase"/>
    <property type="match status" value="1"/>
</dbReference>
<dbReference type="FunFam" id="1.10.40.30:FF:000001">
    <property type="entry name" value="Argininosuccinate lyase"/>
    <property type="match status" value="1"/>
</dbReference>
<dbReference type="FunFam" id="1.20.200.10:FF:000006">
    <property type="entry name" value="Argininosuccinate lyase"/>
    <property type="match status" value="1"/>
</dbReference>
<dbReference type="Gene3D" id="1.10.40.30">
    <property type="entry name" value="Fumarase/aspartase (C-terminal domain)"/>
    <property type="match status" value="1"/>
</dbReference>
<dbReference type="Gene3D" id="1.20.200.10">
    <property type="entry name" value="Fumarase/aspartase (Central domain)"/>
    <property type="match status" value="1"/>
</dbReference>
<dbReference type="Gene3D" id="1.10.275.10">
    <property type="entry name" value="Fumarase/aspartase (N-terminal domain)"/>
    <property type="match status" value="1"/>
</dbReference>
<dbReference type="HAMAP" id="MF_00006">
    <property type="entry name" value="Arg_succ_lyase"/>
    <property type="match status" value="1"/>
</dbReference>
<dbReference type="InterPro" id="IPR029419">
    <property type="entry name" value="Arg_succ_lyase_C"/>
</dbReference>
<dbReference type="InterPro" id="IPR009049">
    <property type="entry name" value="Argininosuccinate_lyase"/>
</dbReference>
<dbReference type="InterPro" id="IPR024083">
    <property type="entry name" value="Fumarase/histidase_N"/>
</dbReference>
<dbReference type="InterPro" id="IPR020557">
    <property type="entry name" value="Fumarate_lyase_CS"/>
</dbReference>
<dbReference type="InterPro" id="IPR000362">
    <property type="entry name" value="Fumarate_lyase_fam"/>
</dbReference>
<dbReference type="InterPro" id="IPR022761">
    <property type="entry name" value="Fumarate_lyase_N"/>
</dbReference>
<dbReference type="InterPro" id="IPR008948">
    <property type="entry name" value="L-Aspartase-like"/>
</dbReference>
<dbReference type="NCBIfam" id="TIGR00838">
    <property type="entry name" value="argH"/>
    <property type="match status" value="1"/>
</dbReference>
<dbReference type="PANTHER" id="PTHR43814">
    <property type="entry name" value="ARGININOSUCCINATE LYASE"/>
    <property type="match status" value="1"/>
</dbReference>
<dbReference type="PANTHER" id="PTHR43814:SF1">
    <property type="entry name" value="ARGININOSUCCINATE LYASE"/>
    <property type="match status" value="1"/>
</dbReference>
<dbReference type="Pfam" id="PF14698">
    <property type="entry name" value="ASL_C2"/>
    <property type="match status" value="1"/>
</dbReference>
<dbReference type="Pfam" id="PF00206">
    <property type="entry name" value="Lyase_1"/>
    <property type="match status" value="1"/>
</dbReference>
<dbReference type="PRINTS" id="PR00145">
    <property type="entry name" value="ARGSUCLYASE"/>
</dbReference>
<dbReference type="PRINTS" id="PR00149">
    <property type="entry name" value="FUMRATELYASE"/>
</dbReference>
<dbReference type="SUPFAM" id="SSF48557">
    <property type="entry name" value="L-aspartase-like"/>
    <property type="match status" value="1"/>
</dbReference>
<dbReference type="PROSITE" id="PS00163">
    <property type="entry name" value="FUMARATE_LYASES"/>
    <property type="match status" value="1"/>
</dbReference>
<gene>
    <name evidence="1" type="primary">argH</name>
    <name type="ordered locus">Msil_1188</name>
</gene>
<organism>
    <name type="scientific">Methylocella silvestris (strain DSM 15510 / CIP 108128 / LMG 27833 / NCIMB 13906 / BL2)</name>
    <dbReference type="NCBI Taxonomy" id="395965"/>
    <lineage>
        <taxon>Bacteria</taxon>
        <taxon>Pseudomonadati</taxon>
        <taxon>Pseudomonadota</taxon>
        <taxon>Alphaproteobacteria</taxon>
        <taxon>Hyphomicrobiales</taxon>
        <taxon>Beijerinckiaceae</taxon>
        <taxon>Methylocella</taxon>
    </lineage>
</organism>
<feature type="chain" id="PRO_1000116334" description="Argininosuccinate lyase">
    <location>
        <begin position="1"/>
        <end position="466"/>
    </location>
</feature>
<comment type="catalytic activity">
    <reaction evidence="1">
        <text>2-(N(omega)-L-arginino)succinate = fumarate + L-arginine</text>
        <dbReference type="Rhea" id="RHEA:24020"/>
        <dbReference type="ChEBI" id="CHEBI:29806"/>
        <dbReference type="ChEBI" id="CHEBI:32682"/>
        <dbReference type="ChEBI" id="CHEBI:57472"/>
        <dbReference type="EC" id="4.3.2.1"/>
    </reaction>
</comment>
<comment type="pathway">
    <text evidence="1">Amino-acid biosynthesis; L-arginine biosynthesis; L-arginine from L-ornithine and carbamoyl phosphate: step 3/3.</text>
</comment>
<comment type="subcellular location">
    <subcellularLocation>
        <location evidence="1">Cytoplasm</location>
    </subcellularLocation>
</comment>
<comment type="similarity">
    <text evidence="1">Belongs to the lyase 1 family. Argininosuccinate lyase subfamily.</text>
</comment>